<proteinExistence type="inferred from homology"/>
<name>GUAA_EDWI9</name>
<protein>
    <recommendedName>
        <fullName evidence="1">GMP synthase [glutamine-hydrolyzing]</fullName>
        <ecNumber evidence="1">6.3.5.2</ecNumber>
    </recommendedName>
    <alternativeName>
        <fullName evidence="1">GMP synthetase</fullName>
    </alternativeName>
    <alternativeName>
        <fullName evidence="1">Glutamine amidotransferase</fullName>
    </alternativeName>
</protein>
<keyword id="KW-0067">ATP-binding</keyword>
<keyword id="KW-0315">Glutamine amidotransferase</keyword>
<keyword id="KW-0332">GMP biosynthesis</keyword>
<keyword id="KW-0436">Ligase</keyword>
<keyword id="KW-0547">Nucleotide-binding</keyword>
<keyword id="KW-0658">Purine biosynthesis</keyword>
<sequence length="525" mass="58166">MTQNIHQDRILILDFGSQYTQLLARRVREIGVYCELWAWDVSEAQIRDFNPSGIILSGGPESTTEAGSPRAPEYVFQAGVPVLGVCYGMQTMAMQLGGRVESSTEREFGYAKVEVTAPGRLFDGIQDALSADGNAVLDVWMSHGDKVTAIPSDFTTVASTETCPYAIMANEAKRFYGVQFHPEVTHTHQGQHMLQRFVLEICGCAALWTPATIIEDAVVRMREQIGDDEVILGLSGGVDSSVTALLLHRAIGKRLTCVFVDNGLLRLNEAEQVMDMFGDRFGLNIIHVNAEARFLSALSGIADPEAKRKTIGRVFVEVFDEEAAKLPQVKWLAQGTIYPDVIESAASATGKAHVIKSHHNVGGLPEEMKLGLVEPLKELFKDEVRKIGLELGLPYDMLYRHPFPGPGLGVRVLGEVKKEYCDLLRRADAIFIEELHKADLYNKVSQAFTVFLPVRSVGVMGDGRKYDWVVSLRAVETIDFMTAHWAHLPYDFLGRVSNRIINEVNGISRVVYDISGKPPATIEWE</sequence>
<accession>C5BER5</accession>
<reference key="1">
    <citation type="submission" date="2009-03" db="EMBL/GenBank/DDBJ databases">
        <title>Complete genome sequence of Edwardsiella ictaluri 93-146.</title>
        <authorList>
            <person name="Williams M.L."/>
            <person name="Gillaspy A.F."/>
            <person name="Dyer D.W."/>
            <person name="Thune R.L."/>
            <person name="Waldbieser G.C."/>
            <person name="Schuster S.C."/>
            <person name="Gipson J."/>
            <person name="Zaitshik J."/>
            <person name="Landry C."/>
            <person name="Lawrence M.L."/>
        </authorList>
    </citation>
    <scope>NUCLEOTIDE SEQUENCE [LARGE SCALE GENOMIC DNA]</scope>
    <source>
        <strain>93-146</strain>
    </source>
</reference>
<gene>
    <name evidence="1" type="primary">guaA</name>
    <name type="ordered locus">NT01EI_3153</name>
</gene>
<organism>
    <name type="scientific">Edwardsiella ictaluri (strain 93-146)</name>
    <dbReference type="NCBI Taxonomy" id="634503"/>
    <lineage>
        <taxon>Bacteria</taxon>
        <taxon>Pseudomonadati</taxon>
        <taxon>Pseudomonadota</taxon>
        <taxon>Gammaproteobacteria</taxon>
        <taxon>Enterobacterales</taxon>
        <taxon>Hafniaceae</taxon>
        <taxon>Edwardsiella</taxon>
    </lineage>
</organism>
<evidence type="ECO:0000255" key="1">
    <source>
        <dbReference type="HAMAP-Rule" id="MF_00344"/>
    </source>
</evidence>
<comment type="function">
    <text evidence="1">Catalyzes the synthesis of GMP from XMP.</text>
</comment>
<comment type="catalytic activity">
    <reaction evidence="1">
        <text>XMP + L-glutamine + ATP + H2O = GMP + L-glutamate + AMP + diphosphate + 2 H(+)</text>
        <dbReference type="Rhea" id="RHEA:11680"/>
        <dbReference type="ChEBI" id="CHEBI:15377"/>
        <dbReference type="ChEBI" id="CHEBI:15378"/>
        <dbReference type="ChEBI" id="CHEBI:29985"/>
        <dbReference type="ChEBI" id="CHEBI:30616"/>
        <dbReference type="ChEBI" id="CHEBI:33019"/>
        <dbReference type="ChEBI" id="CHEBI:57464"/>
        <dbReference type="ChEBI" id="CHEBI:58115"/>
        <dbReference type="ChEBI" id="CHEBI:58359"/>
        <dbReference type="ChEBI" id="CHEBI:456215"/>
        <dbReference type="EC" id="6.3.5.2"/>
    </reaction>
</comment>
<comment type="pathway">
    <text evidence="1">Purine metabolism; GMP biosynthesis; GMP from XMP (L-Gln route): step 1/1.</text>
</comment>
<comment type="subunit">
    <text evidence="1">Homodimer.</text>
</comment>
<feature type="chain" id="PRO_1000205301" description="GMP synthase [glutamine-hydrolyzing]">
    <location>
        <begin position="1"/>
        <end position="525"/>
    </location>
</feature>
<feature type="domain" description="Glutamine amidotransferase type-1" evidence="1">
    <location>
        <begin position="9"/>
        <end position="207"/>
    </location>
</feature>
<feature type="domain" description="GMPS ATP-PPase" evidence="1">
    <location>
        <begin position="208"/>
        <end position="400"/>
    </location>
</feature>
<feature type="active site" description="Nucleophile" evidence="1">
    <location>
        <position position="86"/>
    </location>
</feature>
<feature type="active site" evidence="1">
    <location>
        <position position="181"/>
    </location>
</feature>
<feature type="active site" evidence="1">
    <location>
        <position position="183"/>
    </location>
</feature>
<feature type="binding site" evidence="1">
    <location>
        <begin position="235"/>
        <end position="241"/>
    </location>
    <ligand>
        <name>ATP</name>
        <dbReference type="ChEBI" id="CHEBI:30616"/>
    </ligand>
</feature>
<dbReference type="EC" id="6.3.5.2" evidence="1"/>
<dbReference type="EMBL" id="CP001600">
    <property type="protein sequence ID" value="ACR70303.1"/>
    <property type="molecule type" value="Genomic_DNA"/>
</dbReference>
<dbReference type="RefSeq" id="WP_015872391.1">
    <property type="nucleotide sequence ID" value="NZ_CP169062.1"/>
</dbReference>
<dbReference type="SMR" id="C5BER5"/>
<dbReference type="STRING" id="67780.B6E78_07430"/>
<dbReference type="GeneID" id="69540022"/>
<dbReference type="KEGG" id="eic:NT01EI_3153"/>
<dbReference type="PATRIC" id="fig|634503.3.peg.2814"/>
<dbReference type="HOGENOM" id="CLU_014340_0_5_6"/>
<dbReference type="OrthoDB" id="9802219at2"/>
<dbReference type="UniPathway" id="UPA00189">
    <property type="reaction ID" value="UER00296"/>
</dbReference>
<dbReference type="Proteomes" id="UP000001485">
    <property type="component" value="Chromosome"/>
</dbReference>
<dbReference type="GO" id="GO:0005829">
    <property type="term" value="C:cytosol"/>
    <property type="evidence" value="ECO:0007669"/>
    <property type="project" value="TreeGrafter"/>
</dbReference>
<dbReference type="GO" id="GO:0005524">
    <property type="term" value="F:ATP binding"/>
    <property type="evidence" value="ECO:0007669"/>
    <property type="project" value="UniProtKB-UniRule"/>
</dbReference>
<dbReference type="GO" id="GO:0003921">
    <property type="term" value="F:GMP synthase activity"/>
    <property type="evidence" value="ECO:0007669"/>
    <property type="project" value="InterPro"/>
</dbReference>
<dbReference type="CDD" id="cd01742">
    <property type="entry name" value="GATase1_GMP_Synthase"/>
    <property type="match status" value="1"/>
</dbReference>
<dbReference type="CDD" id="cd01997">
    <property type="entry name" value="GMP_synthase_C"/>
    <property type="match status" value="1"/>
</dbReference>
<dbReference type="FunFam" id="3.30.300.10:FF:000002">
    <property type="entry name" value="GMP synthase [glutamine-hydrolyzing]"/>
    <property type="match status" value="1"/>
</dbReference>
<dbReference type="FunFam" id="3.40.50.620:FF:000001">
    <property type="entry name" value="GMP synthase [glutamine-hydrolyzing]"/>
    <property type="match status" value="1"/>
</dbReference>
<dbReference type="FunFam" id="3.40.50.880:FF:000001">
    <property type="entry name" value="GMP synthase [glutamine-hydrolyzing]"/>
    <property type="match status" value="1"/>
</dbReference>
<dbReference type="Gene3D" id="3.30.300.10">
    <property type="match status" value="1"/>
</dbReference>
<dbReference type="Gene3D" id="3.40.50.880">
    <property type="match status" value="1"/>
</dbReference>
<dbReference type="Gene3D" id="3.40.50.620">
    <property type="entry name" value="HUPs"/>
    <property type="match status" value="1"/>
</dbReference>
<dbReference type="HAMAP" id="MF_00344">
    <property type="entry name" value="GMP_synthase"/>
    <property type="match status" value="1"/>
</dbReference>
<dbReference type="InterPro" id="IPR029062">
    <property type="entry name" value="Class_I_gatase-like"/>
</dbReference>
<dbReference type="InterPro" id="IPR017926">
    <property type="entry name" value="GATASE"/>
</dbReference>
<dbReference type="InterPro" id="IPR001674">
    <property type="entry name" value="GMP_synth_C"/>
</dbReference>
<dbReference type="InterPro" id="IPR004739">
    <property type="entry name" value="GMP_synth_GATase"/>
</dbReference>
<dbReference type="InterPro" id="IPR022955">
    <property type="entry name" value="GMP_synthase"/>
</dbReference>
<dbReference type="InterPro" id="IPR025777">
    <property type="entry name" value="GMPS_ATP_PPase_dom"/>
</dbReference>
<dbReference type="InterPro" id="IPR022310">
    <property type="entry name" value="NAD/GMP_synthase"/>
</dbReference>
<dbReference type="InterPro" id="IPR014729">
    <property type="entry name" value="Rossmann-like_a/b/a_fold"/>
</dbReference>
<dbReference type="NCBIfam" id="TIGR00884">
    <property type="entry name" value="guaA_Cterm"/>
    <property type="match status" value="1"/>
</dbReference>
<dbReference type="NCBIfam" id="TIGR00888">
    <property type="entry name" value="guaA_Nterm"/>
    <property type="match status" value="1"/>
</dbReference>
<dbReference type="NCBIfam" id="NF000848">
    <property type="entry name" value="PRK00074.1"/>
    <property type="match status" value="1"/>
</dbReference>
<dbReference type="PANTHER" id="PTHR11922:SF2">
    <property type="entry name" value="GMP SYNTHASE [GLUTAMINE-HYDROLYZING]"/>
    <property type="match status" value="1"/>
</dbReference>
<dbReference type="PANTHER" id="PTHR11922">
    <property type="entry name" value="GMP SYNTHASE-RELATED"/>
    <property type="match status" value="1"/>
</dbReference>
<dbReference type="Pfam" id="PF00117">
    <property type="entry name" value="GATase"/>
    <property type="match status" value="1"/>
</dbReference>
<dbReference type="Pfam" id="PF00958">
    <property type="entry name" value="GMP_synt_C"/>
    <property type="match status" value="1"/>
</dbReference>
<dbReference type="Pfam" id="PF02540">
    <property type="entry name" value="NAD_synthase"/>
    <property type="match status" value="1"/>
</dbReference>
<dbReference type="PRINTS" id="PR00097">
    <property type="entry name" value="ANTSNTHASEII"/>
</dbReference>
<dbReference type="PRINTS" id="PR00099">
    <property type="entry name" value="CPSGATASE"/>
</dbReference>
<dbReference type="PRINTS" id="PR00096">
    <property type="entry name" value="GATASE"/>
</dbReference>
<dbReference type="SUPFAM" id="SSF52402">
    <property type="entry name" value="Adenine nucleotide alpha hydrolases-like"/>
    <property type="match status" value="1"/>
</dbReference>
<dbReference type="SUPFAM" id="SSF52317">
    <property type="entry name" value="Class I glutamine amidotransferase-like"/>
    <property type="match status" value="1"/>
</dbReference>
<dbReference type="SUPFAM" id="SSF54810">
    <property type="entry name" value="GMP synthetase C-terminal dimerisation domain"/>
    <property type="match status" value="1"/>
</dbReference>
<dbReference type="PROSITE" id="PS51273">
    <property type="entry name" value="GATASE_TYPE_1"/>
    <property type="match status" value="1"/>
</dbReference>
<dbReference type="PROSITE" id="PS51553">
    <property type="entry name" value="GMPS_ATP_PPASE"/>
    <property type="match status" value="1"/>
</dbReference>